<accession>A6QCD3</accession>
<feature type="chain" id="PRO_1000009859" description="Triosephosphate isomerase">
    <location>
        <begin position="1"/>
        <end position="229"/>
    </location>
</feature>
<feature type="active site" description="Electrophile" evidence="1">
    <location>
        <position position="88"/>
    </location>
</feature>
<feature type="active site" description="Proton acceptor" evidence="1">
    <location>
        <position position="157"/>
    </location>
</feature>
<feature type="binding site" evidence="1">
    <location>
        <begin position="6"/>
        <end position="8"/>
    </location>
    <ligand>
        <name>substrate</name>
    </ligand>
</feature>
<feature type="binding site" evidence="1">
    <location>
        <position position="163"/>
    </location>
    <ligand>
        <name>substrate</name>
    </ligand>
</feature>
<feature type="binding site" evidence="1">
    <location>
        <position position="193"/>
    </location>
    <ligand>
        <name>substrate</name>
    </ligand>
</feature>
<evidence type="ECO:0000255" key="1">
    <source>
        <dbReference type="HAMAP-Rule" id="MF_00147"/>
    </source>
</evidence>
<protein>
    <recommendedName>
        <fullName evidence="1">Triosephosphate isomerase</fullName>
        <shortName evidence="1">TIM</shortName>
        <shortName evidence="1">TPI</shortName>
        <ecNumber evidence="1">5.3.1.1</ecNumber>
    </recommendedName>
    <alternativeName>
        <fullName evidence="1">Triose-phosphate isomerase</fullName>
    </alternativeName>
</protein>
<proteinExistence type="inferred from homology"/>
<organism>
    <name type="scientific">Sulfurovum sp. (strain NBC37-1)</name>
    <dbReference type="NCBI Taxonomy" id="387093"/>
    <lineage>
        <taxon>Bacteria</taxon>
        <taxon>Pseudomonadati</taxon>
        <taxon>Campylobacterota</taxon>
        <taxon>Epsilonproteobacteria</taxon>
        <taxon>Campylobacterales</taxon>
        <taxon>Sulfurovaceae</taxon>
        <taxon>Sulfurovum</taxon>
    </lineage>
</organism>
<name>TPIS_SULNB</name>
<reference key="1">
    <citation type="journal article" date="2007" name="Proc. Natl. Acad. Sci. U.S.A.">
        <title>Deep-sea vent epsilon-proteobacterial genomes provide insights into emergence of pathogens.</title>
        <authorList>
            <person name="Nakagawa S."/>
            <person name="Takaki Y."/>
            <person name="Shimamura S."/>
            <person name="Reysenbach A.-L."/>
            <person name="Takai K."/>
            <person name="Horikoshi K."/>
        </authorList>
    </citation>
    <scope>NUCLEOTIDE SEQUENCE [LARGE SCALE GENOMIC DNA]</scope>
    <source>
        <strain>NBC37-1</strain>
    </source>
</reference>
<comment type="function">
    <text evidence="1">Involved in the gluconeogenesis. Catalyzes stereospecifically the conversion of dihydroxyacetone phosphate (DHAP) to D-glyceraldehyde-3-phosphate (G3P).</text>
</comment>
<comment type="catalytic activity">
    <reaction evidence="1">
        <text>D-glyceraldehyde 3-phosphate = dihydroxyacetone phosphate</text>
        <dbReference type="Rhea" id="RHEA:18585"/>
        <dbReference type="ChEBI" id="CHEBI:57642"/>
        <dbReference type="ChEBI" id="CHEBI:59776"/>
        <dbReference type="EC" id="5.3.1.1"/>
    </reaction>
</comment>
<comment type="pathway">
    <text evidence="1">Carbohydrate biosynthesis; gluconeogenesis.</text>
</comment>
<comment type="pathway">
    <text evidence="1">Carbohydrate degradation; glycolysis; D-glyceraldehyde 3-phosphate from glycerone phosphate: step 1/1.</text>
</comment>
<comment type="subunit">
    <text evidence="1">Homodimer.</text>
</comment>
<comment type="subcellular location">
    <subcellularLocation>
        <location evidence="1">Cytoplasm</location>
    </subcellularLocation>
</comment>
<comment type="similarity">
    <text evidence="1">Belongs to the triosephosphate isomerase family.</text>
</comment>
<dbReference type="EC" id="5.3.1.1" evidence="1"/>
<dbReference type="EMBL" id="AP009179">
    <property type="protein sequence ID" value="BAF73142.1"/>
    <property type="molecule type" value="Genomic_DNA"/>
</dbReference>
<dbReference type="RefSeq" id="WP_012083975.1">
    <property type="nucleotide sequence ID" value="NC_009663.1"/>
</dbReference>
<dbReference type="SMR" id="A6QCD3"/>
<dbReference type="STRING" id="387093.SUN_2202"/>
<dbReference type="KEGG" id="sun:SUN_2202"/>
<dbReference type="eggNOG" id="COG0149">
    <property type="taxonomic scope" value="Bacteria"/>
</dbReference>
<dbReference type="HOGENOM" id="CLU_024251_2_3_7"/>
<dbReference type="OrthoDB" id="9809429at2"/>
<dbReference type="UniPathway" id="UPA00109">
    <property type="reaction ID" value="UER00189"/>
</dbReference>
<dbReference type="UniPathway" id="UPA00138"/>
<dbReference type="Proteomes" id="UP000006378">
    <property type="component" value="Chromosome"/>
</dbReference>
<dbReference type="GO" id="GO:0005829">
    <property type="term" value="C:cytosol"/>
    <property type="evidence" value="ECO:0007669"/>
    <property type="project" value="TreeGrafter"/>
</dbReference>
<dbReference type="GO" id="GO:0004807">
    <property type="term" value="F:triose-phosphate isomerase activity"/>
    <property type="evidence" value="ECO:0007669"/>
    <property type="project" value="UniProtKB-UniRule"/>
</dbReference>
<dbReference type="GO" id="GO:0006094">
    <property type="term" value="P:gluconeogenesis"/>
    <property type="evidence" value="ECO:0007669"/>
    <property type="project" value="UniProtKB-UniRule"/>
</dbReference>
<dbReference type="GO" id="GO:0046166">
    <property type="term" value="P:glyceraldehyde-3-phosphate biosynthetic process"/>
    <property type="evidence" value="ECO:0007669"/>
    <property type="project" value="TreeGrafter"/>
</dbReference>
<dbReference type="GO" id="GO:0019563">
    <property type="term" value="P:glycerol catabolic process"/>
    <property type="evidence" value="ECO:0007669"/>
    <property type="project" value="TreeGrafter"/>
</dbReference>
<dbReference type="GO" id="GO:0006096">
    <property type="term" value="P:glycolytic process"/>
    <property type="evidence" value="ECO:0007669"/>
    <property type="project" value="UniProtKB-UniRule"/>
</dbReference>
<dbReference type="CDD" id="cd00311">
    <property type="entry name" value="TIM"/>
    <property type="match status" value="1"/>
</dbReference>
<dbReference type="Gene3D" id="3.20.20.70">
    <property type="entry name" value="Aldolase class I"/>
    <property type="match status" value="1"/>
</dbReference>
<dbReference type="HAMAP" id="MF_00147_B">
    <property type="entry name" value="TIM_B"/>
    <property type="match status" value="1"/>
</dbReference>
<dbReference type="InterPro" id="IPR013785">
    <property type="entry name" value="Aldolase_TIM"/>
</dbReference>
<dbReference type="InterPro" id="IPR035990">
    <property type="entry name" value="TIM_sf"/>
</dbReference>
<dbReference type="InterPro" id="IPR022896">
    <property type="entry name" value="TrioseP_Isoase_bac/euk"/>
</dbReference>
<dbReference type="InterPro" id="IPR000652">
    <property type="entry name" value="Triosephosphate_isomerase"/>
</dbReference>
<dbReference type="InterPro" id="IPR020861">
    <property type="entry name" value="Triosephosphate_isomerase_AS"/>
</dbReference>
<dbReference type="NCBIfam" id="NF000728">
    <property type="entry name" value="PRK00042.3-2"/>
    <property type="match status" value="1"/>
</dbReference>
<dbReference type="NCBIfam" id="TIGR00419">
    <property type="entry name" value="tim"/>
    <property type="match status" value="1"/>
</dbReference>
<dbReference type="PANTHER" id="PTHR21139">
    <property type="entry name" value="TRIOSEPHOSPHATE ISOMERASE"/>
    <property type="match status" value="1"/>
</dbReference>
<dbReference type="PANTHER" id="PTHR21139:SF42">
    <property type="entry name" value="TRIOSEPHOSPHATE ISOMERASE"/>
    <property type="match status" value="1"/>
</dbReference>
<dbReference type="Pfam" id="PF00121">
    <property type="entry name" value="TIM"/>
    <property type="match status" value="1"/>
</dbReference>
<dbReference type="SUPFAM" id="SSF51351">
    <property type="entry name" value="Triosephosphate isomerase (TIM)"/>
    <property type="match status" value="1"/>
</dbReference>
<dbReference type="PROSITE" id="PS00171">
    <property type="entry name" value="TIM_1"/>
    <property type="match status" value="1"/>
</dbReference>
<dbReference type="PROSITE" id="PS51440">
    <property type="entry name" value="TIM_2"/>
    <property type="match status" value="1"/>
</dbReference>
<sequence>MIFAANFKMNHTRASTKAYLDALNQKLASKRSEDRVFVFPPSTALDHYDGDFTIGAQNAYLEKNGAFTGEIGLDQLDEFAIKTILIGHSERRDILGEDQAFVAEKFSYFKSQGFEIIYCIGEALEVREAGEEAVMVHLLSQFEGIDLSYEKMIVAYEPIWAIGTGHSATTEAIASTHAALKQHFDRPLLYGGSVKPANIKEITAIESVDGVLVGSASLEVESFTQMIFA</sequence>
<keyword id="KW-0963">Cytoplasm</keyword>
<keyword id="KW-0312">Gluconeogenesis</keyword>
<keyword id="KW-0324">Glycolysis</keyword>
<keyword id="KW-0413">Isomerase</keyword>
<gene>
    <name evidence="1" type="primary">tpiA</name>
    <name type="ordered locus">SUN_2202</name>
</gene>